<name>T2R46_PANTR</name>
<gene>
    <name type="primary">TAS2R46</name>
</gene>
<dbReference type="EMBL" id="AY724877">
    <property type="protein sequence ID" value="AAU21099.1"/>
    <property type="molecule type" value="Genomic_DNA"/>
</dbReference>
<dbReference type="FunCoup" id="Q646C0">
    <property type="interactions" value="215"/>
</dbReference>
<dbReference type="STRING" id="9598.ENSPTRP00000062790"/>
<dbReference type="GlyCosmos" id="Q646C0">
    <property type="glycosylation" value="2 sites, No reported glycans"/>
</dbReference>
<dbReference type="PaxDb" id="9598-ENSPTRP00000054713"/>
<dbReference type="eggNOG" id="ENOG502TE6U">
    <property type="taxonomic scope" value="Eukaryota"/>
</dbReference>
<dbReference type="InParanoid" id="Q646C0"/>
<dbReference type="Proteomes" id="UP000002277">
    <property type="component" value="Unplaced"/>
</dbReference>
<dbReference type="GO" id="GO:0060170">
    <property type="term" value="C:ciliary membrane"/>
    <property type="evidence" value="ECO:0007669"/>
    <property type="project" value="UniProtKB-SubCell"/>
</dbReference>
<dbReference type="GO" id="GO:0016020">
    <property type="term" value="C:membrane"/>
    <property type="evidence" value="ECO:0000318"/>
    <property type="project" value="GO_Central"/>
</dbReference>
<dbReference type="GO" id="GO:0033038">
    <property type="term" value="F:bitter taste receptor activity"/>
    <property type="evidence" value="ECO:0000318"/>
    <property type="project" value="GO_Central"/>
</dbReference>
<dbReference type="GO" id="GO:0004930">
    <property type="term" value="F:G protein-coupled receptor activity"/>
    <property type="evidence" value="ECO:0007669"/>
    <property type="project" value="UniProtKB-KW"/>
</dbReference>
<dbReference type="GO" id="GO:0001580">
    <property type="term" value="P:detection of chemical stimulus involved in sensory perception of bitter taste"/>
    <property type="evidence" value="ECO:0000318"/>
    <property type="project" value="GO_Central"/>
</dbReference>
<dbReference type="CDD" id="cd15027">
    <property type="entry name" value="7tm_TAS2R43-like"/>
    <property type="match status" value="1"/>
</dbReference>
<dbReference type="FunFam" id="1.20.1070.10:FF:000042">
    <property type="entry name" value="Taste receptor type 2 member 7"/>
    <property type="match status" value="1"/>
</dbReference>
<dbReference type="Gene3D" id="1.20.1070.10">
    <property type="entry name" value="Rhodopsin 7-helix transmembrane proteins"/>
    <property type="match status" value="1"/>
</dbReference>
<dbReference type="InterPro" id="IPR007960">
    <property type="entry name" value="TAS2R"/>
</dbReference>
<dbReference type="PANTHER" id="PTHR11394">
    <property type="entry name" value="TASTE RECEPTOR TYPE 2"/>
    <property type="match status" value="1"/>
</dbReference>
<dbReference type="PANTHER" id="PTHR11394:SF66">
    <property type="entry name" value="TASTE RECEPTOR TYPE 2 MEMBER 46"/>
    <property type="match status" value="1"/>
</dbReference>
<dbReference type="Pfam" id="PF05296">
    <property type="entry name" value="TAS2R"/>
    <property type="match status" value="1"/>
</dbReference>
<dbReference type="SUPFAM" id="SSF81321">
    <property type="entry name" value="Family A G protein-coupled receptor-like"/>
    <property type="match status" value="1"/>
</dbReference>
<protein>
    <recommendedName>
        <fullName>Taste receptor type 2 member 46</fullName>
        <shortName>T2R46</shortName>
    </recommendedName>
</protein>
<feature type="chain" id="PRO_0000082321" description="Taste receptor type 2 member 46">
    <location>
        <begin position="1"/>
        <end position="309"/>
    </location>
</feature>
<feature type="topological domain" description="Extracellular" evidence="2">
    <location>
        <position position="1"/>
    </location>
</feature>
<feature type="transmembrane region" description="Helical; Name=1" evidence="2">
    <location>
        <begin position="2"/>
        <end position="22"/>
    </location>
</feature>
<feature type="topological domain" description="Cytoplasmic" evidence="2">
    <location>
        <begin position="23"/>
        <end position="46"/>
    </location>
</feature>
<feature type="transmembrane region" description="Helical; Name=2" evidence="2">
    <location>
        <begin position="47"/>
        <end position="67"/>
    </location>
</feature>
<feature type="topological domain" description="Extracellular" evidence="2">
    <location>
        <begin position="68"/>
        <end position="86"/>
    </location>
</feature>
<feature type="transmembrane region" description="Helical; Name=3" evidence="2">
    <location>
        <begin position="87"/>
        <end position="107"/>
    </location>
</feature>
<feature type="topological domain" description="Cytoplasmic" evidence="2">
    <location>
        <begin position="108"/>
        <end position="126"/>
    </location>
</feature>
<feature type="transmembrane region" description="Helical; Name=4" evidence="2">
    <location>
        <begin position="127"/>
        <end position="147"/>
    </location>
</feature>
<feature type="topological domain" description="Extracellular" evidence="2">
    <location>
        <begin position="148"/>
        <end position="178"/>
    </location>
</feature>
<feature type="transmembrane region" description="Helical; Name=5" evidence="2">
    <location>
        <begin position="179"/>
        <end position="199"/>
    </location>
</feature>
<feature type="topological domain" description="Cytoplasmic" evidence="2">
    <location>
        <begin position="200"/>
        <end position="229"/>
    </location>
</feature>
<feature type="transmembrane region" description="Helical; Name=6" evidence="2">
    <location>
        <begin position="230"/>
        <end position="250"/>
    </location>
</feature>
<feature type="topological domain" description="Extracellular" evidence="2">
    <location>
        <begin position="251"/>
        <end position="259"/>
    </location>
</feature>
<feature type="transmembrane region" description="Helical; Name=7" evidence="2">
    <location>
        <begin position="260"/>
        <end position="280"/>
    </location>
</feature>
<feature type="topological domain" description="Cytoplasmic" evidence="2">
    <location>
        <begin position="281"/>
        <end position="309"/>
    </location>
</feature>
<feature type="glycosylation site" description="N-linked (GlcNAc...) asparagine" evidence="2">
    <location>
        <position position="161"/>
    </location>
</feature>
<feature type="glycosylation site" description="N-linked (GlcNAc...) asparagine" evidence="2">
    <location>
        <position position="176"/>
    </location>
</feature>
<sequence>MITFLPIIFSILIVVTFVIGNFANGFIALANSIEWFKRQKISFADQILTALAVSRVGLLWVLLLNWYATELNPAFYSIEVRITAYNLWAVINHFSNWLATSLSIFYLLKIANFSNLIFLCLKRRVKSVVLVILLGPLLFLVCHLFVINMNQIIWTKEYEGNMTWKIKLRSAMYLSNTTVTILANLVPFTLTLISFLLLICSLCKHLEKMQLHGKGSQDPSMKVHIKALQTVTSFLLLCAIYFLSIIMSVWSFESLENKPVFMFCEAITFSYPSTHPFILIWGNKKLKQTFLSVLWHVRYWVKGEKPSXP</sequence>
<keyword id="KW-1003">Cell membrane</keyword>
<keyword id="KW-0966">Cell projection</keyword>
<keyword id="KW-0969">Cilium</keyword>
<keyword id="KW-0297">G-protein coupled receptor</keyword>
<keyword id="KW-0325">Glycoprotein</keyword>
<keyword id="KW-0472">Membrane</keyword>
<keyword id="KW-0675">Receptor</keyword>
<keyword id="KW-1185">Reference proteome</keyword>
<keyword id="KW-0716">Sensory transduction</keyword>
<keyword id="KW-0919">Taste</keyword>
<keyword id="KW-0807">Transducer</keyword>
<keyword id="KW-0812">Transmembrane</keyword>
<keyword id="KW-1133">Transmembrane helix</keyword>
<reference key="1">
    <citation type="journal article" date="2005" name="Mol. Biol. Evol.">
        <title>Evolution of bitter taste receptors in humans and apes.</title>
        <authorList>
            <person name="Fischer A."/>
            <person name="Gilad Y."/>
            <person name="Man O."/>
            <person name="Paeaebo S."/>
        </authorList>
    </citation>
    <scope>NUCLEOTIDE SEQUENCE [GENOMIC DNA]</scope>
</reference>
<evidence type="ECO:0000250" key="1"/>
<evidence type="ECO:0000255" key="2"/>
<evidence type="ECO:0000305" key="3"/>
<organism>
    <name type="scientific">Pan troglodytes</name>
    <name type="common">Chimpanzee</name>
    <dbReference type="NCBI Taxonomy" id="9598"/>
    <lineage>
        <taxon>Eukaryota</taxon>
        <taxon>Metazoa</taxon>
        <taxon>Chordata</taxon>
        <taxon>Craniata</taxon>
        <taxon>Vertebrata</taxon>
        <taxon>Euteleostomi</taxon>
        <taxon>Mammalia</taxon>
        <taxon>Eutheria</taxon>
        <taxon>Euarchontoglires</taxon>
        <taxon>Primates</taxon>
        <taxon>Haplorrhini</taxon>
        <taxon>Catarrhini</taxon>
        <taxon>Hominidae</taxon>
        <taxon>Pan</taxon>
    </lineage>
</organism>
<accession>Q646C0</accession>
<proteinExistence type="inferred from homology"/>
<comment type="function">
    <text evidence="1">Receptor that may play a role in the perception of bitterness and is gustducin-linked. May play a role in sensing the chemical composition of the gastrointestinal content. The activity of this receptor may stimulate alpha gustducin, mediate PLC-beta-2 activation and lead to the gating of TRPM5 (By similarity). In airway epithelial cells, binding of bitter compounds increases the intracellular calcium ion concentration and stimulates ciliary beat frequency (By similarity).</text>
</comment>
<comment type="subcellular location">
    <subcellularLocation>
        <location>Membrane</location>
        <topology>Multi-pass membrane protein</topology>
    </subcellularLocation>
    <subcellularLocation>
        <location>Cell projection</location>
        <location>Cilium membrane</location>
    </subcellularLocation>
    <text evidence="1">In airway epithelial cells, localizes to motile cilia.</text>
</comment>
<comment type="miscellaneous">
    <text>Most taste cells may be activated by a limited number of bitter compounds; individual taste cells can discriminate among bitter stimuli.</text>
</comment>
<comment type="similarity">
    <text evidence="3">Belongs to the G-protein coupled receptor T2R family.</text>
</comment>